<keyword id="KW-0150">Chloroplast</keyword>
<keyword id="KW-0934">Plastid</keyword>
<keyword id="KW-0687">Ribonucleoprotein</keyword>
<keyword id="KW-0689">Ribosomal protein</keyword>
<dbReference type="EMBL" id="AP009376">
    <property type="protein sequence ID" value="BAF50679.1"/>
    <property type="molecule type" value="Genomic_DNA"/>
</dbReference>
<dbReference type="EMBL" id="AP009376">
    <property type="protein sequence ID" value="BAF50704.1"/>
    <property type="molecule type" value="Genomic_DNA"/>
</dbReference>
<dbReference type="SMR" id="A4QLX4"/>
<dbReference type="GO" id="GO:0009507">
    <property type="term" value="C:chloroplast"/>
    <property type="evidence" value="ECO:0007669"/>
    <property type="project" value="UniProtKB-SubCell"/>
</dbReference>
<dbReference type="GO" id="GO:0005762">
    <property type="term" value="C:mitochondrial large ribosomal subunit"/>
    <property type="evidence" value="ECO:0007669"/>
    <property type="project" value="TreeGrafter"/>
</dbReference>
<dbReference type="GO" id="GO:0019843">
    <property type="term" value="F:rRNA binding"/>
    <property type="evidence" value="ECO:0007669"/>
    <property type="project" value="UniProtKB-UniRule"/>
</dbReference>
<dbReference type="GO" id="GO:0003735">
    <property type="term" value="F:structural constituent of ribosome"/>
    <property type="evidence" value="ECO:0007669"/>
    <property type="project" value="InterPro"/>
</dbReference>
<dbReference type="GO" id="GO:0016740">
    <property type="term" value="F:transferase activity"/>
    <property type="evidence" value="ECO:0007669"/>
    <property type="project" value="InterPro"/>
</dbReference>
<dbReference type="GO" id="GO:0032543">
    <property type="term" value="P:mitochondrial translation"/>
    <property type="evidence" value="ECO:0007669"/>
    <property type="project" value="TreeGrafter"/>
</dbReference>
<dbReference type="FunFam" id="4.10.950.10:FF:000001">
    <property type="entry name" value="50S ribosomal protein L2"/>
    <property type="match status" value="1"/>
</dbReference>
<dbReference type="FunFam" id="2.30.30.30:FF:000008">
    <property type="entry name" value="50S ribosomal protein L2, chloroplastic"/>
    <property type="match status" value="1"/>
</dbReference>
<dbReference type="FunFam" id="2.40.50.140:FF:000029">
    <property type="entry name" value="50S ribosomal protein L2, chloroplastic"/>
    <property type="match status" value="1"/>
</dbReference>
<dbReference type="Gene3D" id="2.30.30.30">
    <property type="match status" value="1"/>
</dbReference>
<dbReference type="Gene3D" id="2.40.50.140">
    <property type="entry name" value="Nucleic acid-binding proteins"/>
    <property type="match status" value="1"/>
</dbReference>
<dbReference type="Gene3D" id="4.10.950.10">
    <property type="entry name" value="Ribosomal protein L2, domain 3"/>
    <property type="match status" value="1"/>
</dbReference>
<dbReference type="HAMAP" id="MF_01320_B">
    <property type="entry name" value="Ribosomal_uL2_B"/>
    <property type="match status" value="1"/>
</dbReference>
<dbReference type="InterPro" id="IPR012340">
    <property type="entry name" value="NA-bd_OB-fold"/>
</dbReference>
<dbReference type="InterPro" id="IPR014722">
    <property type="entry name" value="Rib_uL2_dom2"/>
</dbReference>
<dbReference type="InterPro" id="IPR002171">
    <property type="entry name" value="Ribosomal_uL2"/>
</dbReference>
<dbReference type="InterPro" id="IPR005880">
    <property type="entry name" value="Ribosomal_uL2_bac/org-type"/>
</dbReference>
<dbReference type="InterPro" id="IPR022669">
    <property type="entry name" value="Ribosomal_uL2_C"/>
</dbReference>
<dbReference type="InterPro" id="IPR022671">
    <property type="entry name" value="Ribosomal_uL2_CS"/>
</dbReference>
<dbReference type="InterPro" id="IPR014726">
    <property type="entry name" value="Ribosomal_uL2_dom3"/>
</dbReference>
<dbReference type="InterPro" id="IPR022666">
    <property type="entry name" value="Ribosomal_uL2_RNA-bd_dom"/>
</dbReference>
<dbReference type="InterPro" id="IPR008991">
    <property type="entry name" value="Translation_prot_SH3-like_sf"/>
</dbReference>
<dbReference type="NCBIfam" id="TIGR01171">
    <property type="entry name" value="rplB_bact"/>
    <property type="match status" value="1"/>
</dbReference>
<dbReference type="PANTHER" id="PTHR13691:SF5">
    <property type="entry name" value="LARGE RIBOSOMAL SUBUNIT PROTEIN UL2M"/>
    <property type="match status" value="1"/>
</dbReference>
<dbReference type="PANTHER" id="PTHR13691">
    <property type="entry name" value="RIBOSOMAL PROTEIN L2"/>
    <property type="match status" value="1"/>
</dbReference>
<dbReference type="Pfam" id="PF00181">
    <property type="entry name" value="Ribosomal_L2"/>
    <property type="match status" value="1"/>
</dbReference>
<dbReference type="Pfam" id="PF03947">
    <property type="entry name" value="Ribosomal_L2_C"/>
    <property type="match status" value="1"/>
</dbReference>
<dbReference type="PIRSF" id="PIRSF002158">
    <property type="entry name" value="Ribosomal_L2"/>
    <property type="match status" value="1"/>
</dbReference>
<dbReference type="SMART" id="SM01383">
    <property type="entry name" value="Ribosomal_L2"/>
    <property type="match status" value="1"/>
</dbReference>
<dbReference type="SMART" id="SM01382">
    <property type="entry name" value="Ribosomal_L2_C"/>
    <property type="match status" value="1"/>
</dbReference>
<dbReference type="SUPFAM" id="SSF50249">
    <property type="entry name" value="Nucleic acid-binding proteins"/>
    <property type="match status" value="1"/>
</dbReference>
<dbReference type="SUPFAM" id="SSF50104">
    <property type="entry name" value="Translation proteins SH3-like domain"/>
    <property type="match status" value="1"/>
</dbReference>
<dbReference type="PROSITE" id="PS00467">
    <property type="entry name" value="RIBOSOMAL_L2"/>
    <property type="match status" value="1"/>
</dbReference>
<geneLocation type="chloroplast"/>
<comment type="subunit">
    <text evidence="1">Part of the 50S ribosomal subunit.</text>
</comment>
<comment type="subcellular location">
    <subcellularLocation>
        <location>Plastid</location>
        <location>Chloroplast</location>
    </subcellularLocation>
</comment>
<comment type="similarity">
    <text evidence="4">Belongs to the universal ribosomal protein uL2 family.</text>
</comment>
<name>RK2_NASOF</name>
<proteinExistence type="inferred from homology"/>
<accession>A4QLX4</accession>
<feature type="chain" id="PRO_0000310082" description="Large ribosomal subunit protein uL2cz/uL2cy">
    <location>
        <begin position="1"/>
        <end position="274"/>
    </location>
</feature>
<feature type="region of interest" description="Disordered" evidence="3">
    <location>
        <begin position="1"/>
        <end position="22"/>
    </location>
</feature>
<feature type="region of interest" description="Disordered" evidence="3">
    <location>
        <begin position="225"/>
        <end position="274"/>
    </location>
</feature>
<sequence>MAIHLYKTSTPSTRNGAVDSQVKSNPRNNLIYGQHHCGKGRNARGIITARHRGGGHKRLYRKIDFRRNAKDIYGRIVTIEYDPNRNAYICLIHYGDGEKRYILHPRGAIIGDTIVSGTEVPIKMGNALPLTDMPLGTAIHNIEITLGKGGQLARAAGAVAKLIAKEGKSATLKLPSGEVRLISKNCSATVGQVGNVGVNQKSLGRAGSKCWLGKRPVVRGVVMNPVDHPHGGGEGRAPIGRKKPVTPWGYPALGRRTRKRKKYSETLILRRRSK</sequence>
<reference key="1">
    <citation type="submission" date="2007-03" db="EMBL/GenBank/DDBJ databases">
        <title>Sequencing analysis of Nasturtium officinale chloroplast DNA.</title>
        <authorList>
            <person name="Hosouchi T."/>
            <person name="Tsuruoka H."/>
            <person name="Kotani H."/>
        </authorList>
    </citation>
    <scope>NUCLEOTIDE SEQUENCE [LARGE SCALE GENOMIC DNA]</scope>
</reference>
<organism>
    <name type="scientific">Nasturtium officinale</name>
    <name type="common">Watercress</name>
    <name type="synonym">Rorippa nasturtium-aquaticum</name>
    <dbReference type="NCBI Taxonomy" id="65948"/>
    <lineage>
        <taxon>Eukaryota</taxon>
        <taxon>Viridiplantae</taxon>
        <taxon>Streptophyta</taxon>
        <taxon>Embryophyta</taxon>
        <taxon>Tracheophyta</taxon>
        <taxon>Spermatophyta</taxon>
        <taxon>Magnoliopsida</taxon>
        <taxon>eudicotyledons</taxon>
        <taxon>Gunneridae</taxon>
        <taxon>Pentapetalae</taxon>
        <taxon>rosids</taxon>
        <taxon>malvids</taxon>
        <taxon>Brassicales</taxon>
        <taxon>Brassicaceae</taxon>
        <taxon>Cardamineae</taxon>
        <taxon>Nasturtium</taxon>
    </lineage>
</organism>
<gene>
    <name type="primary">rpl2-A</name>
</gene>
<gene>
    <name type="primary">rpl2-B</name>
</gene>
<evidence type="ECO:0000250" key="1"/>
<evidence type="ECO:0000255" key="2">
    <source>
        <dbReference type="HAMAP-Rule" id="MF_01320"/>
    </source>
</evidence>
<evidence type="ECO:0000256" key="3">
    <source>
        <dbReference type="SAM" id="MobiDB-lite"/>
    </source>
</evidence>
<evidence type="ECO:0000305" key="4"/>
<protein>
    <recommendedName>
        <fullName evidence="2">Large ribosomal subunit protein uL2cz/uL2cy</fullName>
    </recommendedName>
    <alternativeName>
        <fullName evidence="4">50S ribosomal protein L2, chloroplastic</fullName>
    </alternativeName>
</protein>